<feature type="signal peptide" evidence="1">
    <location>
        <begin position="1"/>
        <end status="unknown"/>
    </location>
</feature>
<feature type="chain" id="PRO_0000012824" description="Diuretic hormone receptor">
    <location>
        <begin status="unknown"/>
        <end position="441"/>
    </location>
</feature>
<feature type="topological domain" description="Extracellular" evidence="1">
    <location>
        <begin status="unknown"/>
        <end position="134"/>
    </location>
</feature>
<feature type="transmembrane region" description="Helical; Name=1" evidence="1">
    <location>
        <begin position="135"/>
        <end position="158"/>
    </location>
</feature>
<feature type="topological domain" description="Cytoplasmic" evidence="1">
    <location>
        <begin position="159"/>
        <end position="166"/>
    </location>
</feature>
<feature type="transmembrane region" description="Helical; Name=2" evidence="1">
    <location>
        <begin position="167"/>
        <end position="187"/>
    </location>
</feature>
<feature type="topological domain" description="Extracellular" evidence="1">
    <location>
        <begin position="188"/>
        <end position="194"/>
    </location>
</feature>
<feature type="transmembrane region" description="Helical; Name=3" evidence="1">
    <location>
        <begin position="195"/>
        <end position="224"/>
    </location>
</feature>
<feature type="topological domain" description="Cytoplasmic" evidence="1">
    <location>
        <begin position="225"/>
        <end position="238"/>
    </location>
</feature>
<feature type="transmembrane region" description="Helical; Name=4" evidence="1">
    <location>
        <begin position="239"/>
        <end position="260"/>
    </location>
</feature>
<feature type="topological domain" description="Extracellular" evidence="1">
    <location>
        <begin position="261"/>
        <end position="291"/>
    </location>
</feature>
<feature type="transmembrane region" description="Helical; Name=5" evidence="1">
    <location>
        <begin position="292"/>
        <end position="315"/>
    </location>
</feature>
<feature type="topological domain" description="Cytoplasmic" evidence="1">
    <location>
        <begin position="316"/>
        <end position="338"/>
    </location>
</feature>
<feature type="transmembrane region" description="Helical; Name=6" evidence="1">
    <location>
        <begin position="339"/>
        <end position="357"/>
    </location>
</feature>
<feature type="topological domain" description="Extracellular" evidence="1">
    <location>
        <begin position="358"/>
        <end position="371"/>
    </location>
</feature>
<feature type="transmembrane region" description="Helical; Name=7" evidence="1">
    <location>
        <begin position="372"/>
        <end position="391"/>
    </location>
</feature>
<feature type="topological domain" description="Cytoplasmic" evidence="1">
    <location>
        <begin position="392"/>
        <end position="441"/>
    </location>
</feature>
<feature type="glycosylation site" description="N-linked (GlcNAc...) asparagine" evidence="1">
    <location>
        <position position="99"/>
    </location>
</feature>
<feature type="glycosylation site" description="N-linked (GlcNAc...) asparagine" evidence="1">
    <location>
        <position position="107"/>
    </location>
</feature>
<feature type="glycosylation site" description="N-linked (GlcNAc...) asparagine" evidence="1">
    <location>
        <position position="112"/>
    </location>
</feature>
<name>DIHR_ACHDO</name>
<comment type="function">
    <text>Receptor for the insect diurectic hormone. The activity of this receptor is mediated by G proteins which activate adenylyl cyclase.</text>
</comment>
<comment type="subcellular location">
    <subcellularLocation>
        <location>Cell membrane</location>
        <topology>Multi-pass membrane protein</topology>
    </subcellularLocation>
</comment>
<comment type="tissue specificity">
    <text>Expressed in Malpighian tubules.</text>
</comment>
<comment type="similarity">
    <text evidence="2">Belongs to the G-protein coupled receptor 2 family.</text>
</comment>
<proteinExistence type="evidence at transcript level"/>
<dbReference type="EMBL" id="U15959">
    <property type="protein sequence ID" value="AAC47000.1"/>
    <property type="molecule type" value="mRNA"/>
</dbReference>
<dbReference type="SMR" id="Q16983"/>
<dbReference type="TCDB" id="9.A.14.4.4">
    <property type="family name" value="the g-protein-coupled receptor (gpcr) family"/>
</dbReference>
<dbReference type="GO" id="GO:0005886">
    <property type="term" value="C:plasma membrane"/>
    <property type="evidence" value="ECO:0007669"/>
    <property type="project" value="UniProtKB-SubCell"/>
</dbReference>
<dbReference type="GO" id="GO:0008036">
    <property type="term" value="F:diuretic hormone receptor activity"/>
    <property type="evidence" value="ECO:0007669"/>
    <property type="project" value="InterPro"/>
</dbReference>
<dbReference type="GO" id="GO:0008528">
    <property type="term" value="F:G protein-coupled peptide receptor activity"/>
    <property type="evidence" value="ECO:0007669"/>
    <property type="project" value="TreeGrafter"/>
</dbReference>
<dbReference type="GO" id="GO:0017046">
    <property type="term" value="F:peptide hormone binding"/>
    <property type="evidence" value="ECO:0007669"/>
    <property type="project" value="TreeGrafter"/>
</dbReference>
<dbReference type="GO" id="GO:0007188">
    <property type="term" value="P:adenylate cyclase-modulating G protein-coupled receptor signaling pathway"/>
    <property type="evidence" value="ECO:0007669"/>
    <property type="project" value="TreeGrafter"/>
</dbReference>
<dbReference type="GO" id="GO:0007166">
    <property type="term" value="P:cell surface receptor signaling pathway"/>
    <property type="evidence" value="ECO:0007669"/>
    <property type="project" value="InterPro"/>
</dbReference>
<dbReference type="CDD" id="cd15263">
    <property type="entry name" value="7tmB1_DH_R"/>
    <property type="match status" value="1"/>
</dbReference>
<dbReference type="FunFam" id="1.20.1070.10:FF:000155">
    <property type="entry name" value="diuretic hormone receptor isoform X1"/>
    <property type="match status" value="1"/>
</dbReference>
<dbReference type="Gene3D" id="4.10.1240.10">
    <property type="entry name" value="GPCR, family 2, extracellular hormone receptor domain"/>
    <property type="match status" value="1"/>
</dbReference>
<dbReference type="Gene3D" id="1.20.1070.10">
    <property type="entry name" value="Rhodopsin 7-helix transmembrane proteins"/>
    <property type="match status" value="1"/>
</dbReference>
<dbReference type="InterPro" id="IPR050332">
    <property type="entry name" value="GPCR_2"/>
</dbReference>
<dbReference type="InterPro" id="IPR017981">
    <property type="entry name" value="GPCR_2-like_7TM"/>
</dbReference>
<dbReference type="InterPro" id="IPR002001">
    <property type="entry name" value="GPCR_2_diuretic_rcpt"/>
</dbReference>
<dbReference type="InterPro" id="IPR036445">
    <property type="entry name" value="GPCR_2_extracell_dom_sf"/>
</dbReference>
<dbReference type="InterPro" id="IPR001879">
    <property type="entry name" value="GPCR_2_extracellular_dom"/>
</dbReference>
<dbReference type="InterPro" id="IPR000832">
    <property type="entry name" value="GPCR_2_secretin-like"/>
</dbReference>
<dbReference type="InterPro" id="IPR017983">
    <property type="entry name" value="GPCR_2_secretin-like_CS"/>
</dbReference>
<dbReference type="PANTHER" id="PTHR45620:SF15">
    <property type="entry name" value="DIURETIC HORMONE 44 RECEPTOR 1-RELATED"/>
    <property type="match status" value="1"/>
</dbReference>
<dbReference type="PANTHER" id="PTHR45620">
    <property type="entry name" value="PDF RECEPTOR-LIKE PROTEIN-RELATED"/>
    <property type="match status" value="1"/>
</dbReference>
<dbReference type="Pfam" id="PF00002">
    <property type="entry name" value="7tm_2"/>
    <property type="match status" value="1"/>
</dbReference>
<dbReference type="Pfam" id="PF02793">
    <property type="entry name" value="HRM"/>
    <property type="match status" value="1"/>
</dbReference>
<dbReference type="PRINTS" id="PR01127">
    <property type="entry name" value="DIUHORMONER"/>
</dbReference>
<dbReference type="PRINTS" id="PR00249">
    <property type="entry name" value="GPCRSECRETIN"/>
</dbReference>
<dbReference type="SMART" id="SM00008">
    <property type="entry name" value="HormR"/>
    <property type="match status" value="1"/>
</dbReference>
<dbReference type="SUPFAM" id="SSF81321">
    <property type="entry name" value="Family A G protein-coupled receptor-like"/>
    <property type="match status" value="1"/>
</dbReference>
<dbReference type="SUPFAM" id="SSF111418">
    <property type="entry name" value="Hormone receptor domain"/>
    <property type="match status" value="1"/>
</dbReference>
<dbReference type="PROSITE" id="PS00649">
    <property type="entry name" value="G_PROTEIN_RECEP_F2_1"/>
    <property type="match status" value="1"/>
</dbReference>
<dbReference type="PROSITE" id="PS00650">
    <property type="entry name" value="G_PROTEIN_RECEP_F2_2"/>
    <property type="match status" value="1"/>
</dbReference>
<dbReference type="PROSITE" id="PS50227">
    <property type="entry name" value="G_PROTEIN_RECEP_F2_3"/>
    <property type="match status" value="1"/>
</dbReference>
<dbReference type="PROSITE" id="PS50261">
    <property type="entry name" value="G_PROTEIN_RECEP_F2_4"/>
    <property type="match status" value="1"/>
</dbReference>
<evidence type="ECO:0000255" key="1"/>
<evidence type="ECO:0000305" key="2"/>
<keyword id="KW-1003">Cell membrane</keyword>
<keyword id="KW-0297">G-protein coupled receptor</keyword>
<keyword id="KW-0325">Glycoprotein</keyword>
<keyword id="KW-0472">Membrane</keyword>
<keyword id="KW-0675">Receptor</keyword>
<keyword id="KW-0732">Signal</keyword>
<keyword id="KW-0807">Transducer</keyword>
<keyword id="KW-0812">Transmembrane</keyword>
<keyword id="KW-1133">Transmembrane helix</keyword>
<organism>
    <name type="scientific">Acheta domesticus</name>
    <name type="common">House cricket</name>
    <dbReference type="NCBI Taxonomy" id="6997"/>
    <lineage>
        <taxon>Eukaryota</taxon>
        <taxon>Metazoa</taxon>
        <taxon>Ecdysozoa</taxon>
        <taxon>Arthropoda</taxon>
        <taxon>Hexapoda</taxon>
        <taxon>Insecta</taxon>
        <taxon>Pterygota</taxon>
        <taxon>Neoptera</taxon>
        <taxon>Polyneoptera</taxon>
        <taxon>Orthoptera</taxon>
        <taxon>Ensifera</taxon>
        <taxon>Gryllidea</taxon>
        <taxon>Grylloidea</taxon>
        <taxon>Gryllidae</taxon>
        <taxon>Gryllinae</taxon>
        <taxon>Acheta</taxon>
    </lineage>
</organism>
<accession>Q16983</accession>
<reference key="1">
    <citation type="journal article" date="1996" name="Insect Biochem. Mol. Biol.">
        <title>Molecular cloning and function expression of a diuretic hormone receptor from the house cricket, Acheta domesticus.</title>
        <authorList>
            <person name="Reagan J.D."/>
        </authorList>
    </citation>
    <scope>NUCLEOTIDE SEQUENCE [MRNA]</scope>
    <source>
        <tissue>Malpighian tubule</tissue>
    </source>
</reference>
<protein>
    <recommendedName>
        <fullName>Diuretic hormone receptor</fullName>
        <shortName>DH-R</shortName>
    </recommendedName>
</protein>
<sequence>MEDAWEADALEAAEAAAAAAQAVAADAPTTTPSPRTLQRQRACEALMEGDAPDAAPDAPLRCAIAWDGVNCWPETPAGALAVQPCFDELNGIRYDIRQNATRMCYSNGTWRNYSDYVHCRELVEAESDEDAAMAFVFFVGFCLSLVAIAVAIWIFLYFKDLRCLRNTIHTNLMATYICNDATWIISAVVQEYVENGGLCSVLAVLMHYFYLTNFFWMFVEGLYLFLLVVATFTGEKVKLQIYIIIGWGIPGVIVVTWAIIKHLGKTAPDNAGESHPMVLLIKHCPWMAEDYFDWIHQAPVITVLAVNLVFLFSIMWVLITKLQSANTAETQQYRKATKALLVLFPLLGITYILMMQGPMDGVAGHVFRNAQALLLSLQGFTVALFYCFLNTEVQNTLRHRMSRWRETRTVGGGRRYTLSGHSKDWSPRSRTESIRCLQHRS</sequence>